<name>MSCL_SALCH</name>
<gene>
    <name evidence="1" type="primary">mscL</name>
    <name type="ordered locus">SCH_3346</name>
</gene>
<dbReference type="EMBL" id="AE017220">
    <property type="protein sequence ID" value="AAX67252.1"/>
    <property type="molecule type" value="Genomic_DNA"/>
</dbReference>
<dbReference type="RefSeq" id="WP_000008120.1">
    <property type="nucleotide sequence ID" value="NC_006905.1"/>
</dbReference>
<dbReference type="SMR" id="Q57J60"/>
<dbReference type="KEGG" id="sec:SCH_3346"/>
<dbReference type="HOGENOM" id="CLU_095787_0_0_6"/>
<dbReference type="Proteomes" id="UP000000538">
    <property type="component" value="Chromosome"/>
</dbReference>
<dbReference type="GO" id="GO:0005886">
    <property type="term" value="C:plasma membrane"/>
    <property type="evidence" value="ECO:0007669"/>
    <property type="project" value="UniProtKB-SubCell"/>
</dbReference>
<dbReference type="GO" id="GO:0008381">
    <property type="term" value="F:mechanosensitive monoatomic ion channel activity"/>
    <property type="evidence" value="ECO:0007669"/>
    <property type="project" value="UniProtKB-UniRule"/>
</dbReference>
<dbReference type="FunFam" id="1.10.1200.120:FF:000001">
    <property type="entry name" value="Large-conductance mechanosensitive channel"/>
    <property type="match status" value="1"/>
</dbReference>
<dbReference type="Gene3D" id="1.10.1200.120">
    <property type="entry name" value="Large-conductance mechanosensitive channel, MscL, domain 1"/>
    <property type="match status" value="1"/>
</dbReference>
<dbReference type="HAMAP" id="MF_00115">
    <property type="entry name" value="MscL"/>
    <property type="match status" value="1"/>
</dbReference>
<dbReference type="InterPro" id="IPR019823">
    <property type="entry name" value="Mechanosensitive_channel_CS"/>
</dbReference>
<dbReference type="InterPro" id="IPR001185">
    <property type="entry name" value="MS_channel"/>
</dbReference>
<dbReference type="InterPro" id="IPR037673">
    <property type="entry name" value="MSC/AndL"/>
</dbReference>
<dbReference type="InterPro" id="IPR036019">
    <property type="entry name" value="MscL_channel"/>
</dbReference>
<dbReference type="NCBIfam" id="TIGR00220">
    <property type="entry name" value="mscL"/>
    <property type="match status" value="1"/>
</dbReference>
<dbReference type="NCBIfam" id="NF001841">
    <property type="entry name" value="PRK00567.1-1"/>
    <property type="match status" value="1"/>
</dbReference>
<dbReference type="NCBIfam" id="NF001843">
    <property type="entry name" value="PRK00567.1-4"/>
    <property type="match status" value="1"/>
</dbReference>
<dbReference type="PANTHER" id="PTHR30266:SF2">
    <property type="entry name" value="LARGE-CONDUCTANCE MECHANOSENSITIVE CHANNEL"/>
    <property type="match status" value="1"/>
</dbReference>
<dbReference type="PANTHER" id="PTHR30266">
    <property type="entry name" value="MECHANOSENSITIVE CHANNEL MSCL"/>
    <property type="match status" value="1"/>
</dbReference>
<dbReference type="Pfam" id="PF01741">
    <property type="entry name" value="MscL"/>
    <property type="match status" value="1"/>
</dbReference>
<dbReference type="PRINTS" id="PR01264">
    <property type="entry name" value="MECHCHANNEL"/>
</dbReference>
<dbReference type="SUPFAM" id="SSF81330">
    <property type="entry name" value="Gated mechanosensitive channel"/>
    <property type="match status" value="1"/>
</dbReference>
<dbReference type="PROSITE" id="PS01327">
    <property type="entry name" value="MSCL"/>
    <property type="match status" value="1"/>
</dbReference>
<evidence type="ECO:0000255" key="1">
    <source>
        <dbReference type="HAMAP-Rule" id="MF_00115"/>
    </source>
</evidence>
<accession>Q57J60</accession>
<feature type="chain" id="PRO_0000238031" description="Large-conductance mechanosensitive channel">
    <location>
        <begin position="1"/>
        <end position="137"/>
    </location>
</feature>
<feature type="transmembrane region" description="Helical" evidence="1">
    <location>
        <begin position="10"/>
        <end position="30"/>
    </location>
</feature>
<feature type="transmembrane region" description="Helical" evidence="1">
    <location>
        <begin position="76"/>
        <end position="96"/>
    </location>
</feature>
<keyword id="KW-0997">Cell inner membrane</keyword>
<keyword id="KW-1003">Cell membrane</keyword>
<keyword id="KW-0407">Ion channel</keyword>
<keyword id="KW-0406">Ion transport</keyword>
<keyword id="KW-0472">Membrane</keyword>
<keyword id="KW-0812">Transmembrane</keyword>
<keyword id="KW-1133">Transmembrane helix</keyword>
<keyword id="KW-0813">Transport</keyword>
<sequence>MSFIKEFREFAMRGNVVDLAVGVIIGAAFGKIVSSLVADIIMPPLGLLISGIDFKQFAFTLREAQGDIPAVVMHYGVFIQNVFDFVIVAFAIFVAIKLINRLNRKKAEEPAAPPAPSKEEVLLGEIRDLLKEQNNRS</sequence>
<protein>
    <recommendedName>
        <fullName evidence="1">Large-conductance mechanosensitive channel</fullName>
    </recommendedName>
</protein>
<reference key="1">
    <citation type="journal article" date="2005" name="Nucleic Acids Res.">
        <title>The genome sequence of Salmonella enterica serovar Choleraesuis, a highly invasive and resistant zoonotic pathogen.</title>
        <authorList>
            <person name="Chiu C.-H."/>
            <person name="Tang P."/>
            <person name="Chu C."/>
            <person name="Hu S."/>
            <person name="Bao Q."/>
            <person name="Yu J."/>
            <person name="Chou Y.-Y."/>
            <person name="Wang H.-S."/>
            <person name="Lee Y.-S."/>
        </authorList>
    </citation>
    <scope>NUCLEOTIDE SEQUENCE [LARGE SCALE GENOMIC DNA]</scope>
    <source>
        <strain>SC-B67</strain>
    </source>
</reference>
<organism>
    <name type="scientific">Salmonella choleraesuis (strain SC-B67)</name>
    <dbReference type="NCBI Taxonomy" id="321314"/>
    <lineage>
        <taxon>Bacteria</taxon>
        <taxon>Pseudomonadati</taxon>
        <taxon>Pseudomonadota</taxon>
        <taxon>Gammaproteobacteria</taxon>
        <taxon>Enterobacterales</taxon>
        <taxon>Enterobacteriaceae</taxon>
        <taxon>Salmonella</taxon>
    </lineage>
</organism>
<comment type="function">
    <text evidence="1">Channel that opens in response to stretch forces in the membrane lipid bilayer. May participate in the regulation of osmotic pressure changes within the cell.</text>
</comment>
<comment type="subunit">
    <text evidence="1">Homopentamer.</text>
</comment>
<comment type="subcellular location">
    <subcellularLocation>
        <location evidence="1">Cell inner membrane</location>
        <topology evidence="1">Multi-pass membrane protein</topology>
    </subcellularLocation>
</comment>
<comment type="similarity">
    <text evidence="1">Belongs to the MscL family.</text>
</comment>
<proteinExistence type="inferred from homology"/>